<protein>
    <recommendedName>
        <fullName evidence="1">Small ribosomal subunit protein uS13</fullName>
    </recommendedName>
    <alternativeName>
        <fullName evidence="3">30S ribosomal protein S13</fullName>
    </alternativeName>
</protein>
<dbReference type="EMBL" id="CP000903">
    <property type="protein sequence ID" value="ABY41399.1"/>
    <property type="molecule type" value="Genomic_DNA"/>
</dbReference>
<dbReference type="RefSeq" id="WP_002063431.1">
    <property type="nucleotide sequence ID" value="NC_010184.1"/>
</dbReference>
<dbReference type="SMR" id="A9VPA2"/>
<dbReference type="KEGG" id="bwe:BcerKBAB4_0130"/>
<dbReference type="eggNOG" id="COG0099">
    <property type="taxonomic scope" value="Bacteria"/>
</dbReference>
<dbReference type="HOGENOM" id="CLU_103849_1_1_9"/>
<dbReference type="Proteomes" id="UP000002154">
    <property type="component" value="Chromosome"/>
</dbReference>
<dbReference type="GO" id="GO:0005829">
    <property type="term" value="C:cytosol"/>
    <property type="evidence" value="ECO:0007669"/>
    <property type="project" value="TreeGrafter"/>
</dbReference>
<dbReference type="GO" id="GO:0015935">
    <property type="term" value="C:small ribosomal subunit"/>
    <property type="evidence" value="ECO:0007669"/>
    <property type="project" value="TreeGrafter"/>
</dbReference>
<dbReference type="GO" id="GO:0019843">
    <property type="term" value="F:rRNA binding"/>
    <property type="evidence" value="ECO:0007669"/>
    <property type="project" value="UniProtKB-UniRule"/>
</dbReference>
<dbReference type="GO" id="GO:0003735">
    <property type="term" value="F:structural constituent of ribosome"/>
    <property type="evidence" value="ECO:0007669"/>
    <property type="project" value="InterPro"/>
</dbReference>
<dbReference type="GO" id="GO:0000049">
    <property type="term" value="F:tRNA binding"/>
    <property type="evidence" value="ECO:0007669"/>
    <property type="project" value="UniProtKB-UniRule"/>
</dbReference>
<dbReference type="GO" id="GO:0006412">
    <property type="term" value="P:translation"/>
    <property type="evidence" value="ECO:0007669"/>
    <property type="project" value="UniProtKB-UniRule"/>
</dbReference>
<dbReference type="FunFam" id="1.10.8.50:FF:000001">
    <property type="entry name" value="30S ribosomal protein S13"/>
    <property type="match status" value="1"/>
</dbReference>
<dbReference type="FunFam" id="4.10.910.10:FF:000001">
    <property type="entry name" value="30S ribosomal protein S13"/>
    <property type="match status" value="1"/>
</dbReference>
<dbReference type="Gene3D" id="1.10.8.50">
    <property type="match status" value="1"/>
</dbReference>
<dbReference type="Gene3D" id="4.10.910.10">
    <property type="entry name" value="30s ribosomal protein s13, domain 2"/>
    <property type="match status" value="1"/>
</dbReference>
<dbReference type="HAMAP" id="MF_01315">
    <property type="entry name" value="Ribosomal_uS13"/>
    <property type="match status" value="1"/>
</dbReference>
<dbReference type="InterPro" id="IPR027437">
    <property type="entry name" value="Rbsml_uS13_C"/>
</dbReference>
<dbReference type="InterPro" id="IPR001892">
    <property type="entry name" value="Ribosomal_uS13"/>
</dbReference>
<dbReference type="InterPro" id="IPR010979">
    <property type="entry name" value="Ribosomal_uS13-like_H2TH"/>
</dbReference>
<dbReference type="InterPro" id="IPR019980">
    <property type="entry name" value="Ribosomal_uS13_bac-type"/>
</dbReference>
<dbReference type="InterPro" id="IPR018269">
    <property type="entry name" value="Ribosomal_uS13_CS"/>
</dbReference>
<dbReference type="NCBIfam" id="TIGR03631">
    <property type="entry name" value="uS13_bact"/>
    <property type="match status" value="1"/>
</dbReference>
<dbReference type="PANTHER" id="PTHR10871">
    <property type="entry name" value="30S RIBOSOMAL PROTEIN S13/40S RIBOSOMAL PROTEIN S18"/>
    <property type="match status" value="1"/>
</dbReference>
<dbReference type="PANTHER" id="PTHR10871:SF1">
    <property type="entry name" value="SMALL RIBOSOMAL SUBUNIT PROTEIN US13M"/>
    <property type="match status" value="1"/>
</dbReference>
<dbReference type="Pfam" id="PF00416">
    <property type="entry name" value="Ribosomal_S13"/>
    <property type="match status" value="1"/>
</dbReference>
<dbReference type="PIRSF" id="PIRSF002134">
    <property type="entry name" value="Ribosomal_S13"/>
    <property type="match status" value="1"/>
</dbReference>
<dbReference type="SUPFAM" id="SSF46946">
    <property type="entry name" value="S13-like H2TH domain"/>
    <property type="match status" value="1"/>
</dbReference>
<dbReference type="PROSITE" id="PS00646">
    <property type="entry name" value="RIBOSOMAL_S13_1"/>
    <property type="match status" value="1"/>
</dbReference>
<dbReference type="PROSITE" id="PS50159">
    <property type="entry name" value="RIBOSOMAL_S13_2"/>
    <property type="match status" value="1"/>
</dbReference>
<reference key="1">
    <citation type="journal article" date="2008" name="Chem. Biol. Interact.">
        <title>Extending the Bacillus cereus group genomics to putative food-borne pathogens of different toxicity.</title>
        <authorList>
            <person name="Lapidus A."/>
            <person name="Goltsman E."/>
            <person name="Auger S."/>
            <person name="Galleron N."/>
            <person name="Segurens B."/>
            <person name="Dossat C."/>
            <person name="Land M.L."/>
            <person name="Broussolle V."/>
            <person name="Brillard J."/>
            <person name="Guinebretiere M.-H."/>
            <person name="Sanchis V."/>
            <person name="Nguen-the C."/>
            <person name="Lereclus D."/>
            <person name="Richardson P."/>
            <person name="Wincker P."/>
            <person name="Weissenbach J."/>
            <person name="Ehrlich S.D."/>
            <person name="Sorokin A."/>
        </authorList>
    </citation>
    <scope>NUCLEOTIDE SEQUENCE [LARGE SCALE GENOMIC DNA]</scope>
    <source>
        <strain>KBAB4</strain>
    </source>
</reference>
<organism>
    <name type="scientific">Bacillus mycoides (strain KBAB4)</name>
    <name type="common">Bacillus weihenstephanensis</name>
    <dbReference type="NCBI Taxonomy" id="315730"/>
    <lineage>
        <taxon>Bacteria</taxon>
        <taxon>Bacillati</taxon>
        <taxon>Bacillota</taxon>
        <taxon>Bacilli</taxon>
        <taxon>Bacillales</taxon>
        <taxon>Bacillaceae</taxon>
        <taxon>Bacillus</taxon>
        <taxon>Bacillus cereus group</taxon>
    </lineage>
</organism>
<name>RS13_BACMK</name>
<gene>
    <name evidence="1" type="primary">rpsM</name>
    <name type="ordered locus">BcerKBAB4_0130</name>
</gene>
<accession>A9VPA2</accession>
<sequence>MARIAGVDIPRDKRVVISLTYVFGIGRTTAEKIITEAGISSETRVRDLSEDELGRIRDIIDRIKVEGDLRREVSLNIKRLMEIGSYRGLRHRRGLPVRGQNSKNNARTRKGPRRTVANKKK</sequence>
<keyword id="KW-0687">Ribonucleoprotein</keyword>
<keyword id="KW-0689">Ribosomal protein</keyword>
<keyword id="KW-0694">RNA-binding</keyword>
<keyword id="KW-0699">rRNA-binding</keyword>
<keyword id="KW-0820">tRNA-binding</keyword>
<feature type="chain" id="PRO_1000141220" description="Small ribosomal subunit protein uS13">
    <location>
        <begin position="1"/>
        <end position="121"/>
    </location>
</feature>
<feature type="region of interest" description="Disordered" evidence="2">
    <location>
        <begin position="91"/>
        <end position="121"/>
    </location>
</feature>
<feature type="compositionally biased region" description="Basic residues" evidence="2">
    <location>
        <begin position="106"/>
        <end position="121"/>
    </location>
</feature>
<proteinExistence type="inferred from homology"/>
<evidence type="ECO:0000255" key="1">
    <source>
        <dbReference type="HAMAP-Rule" id="MF_01315"/>
    </source>
</evidence>
<evidence type="ECO:0000256" key="2">
    <source>
        <dbReference type="SAM" id="MobiDB-lite"/>
    </source>
</evidence>
<evidence type="ECO:0000305" key="3"/>
<comment type="function">
    <text evidence="1">Located at the top of the head of the 30S subunit, it contacts several helices of the 16S rRNA. In the 70S ribosome it contacts the 23S rRNA (bridge B1a) and protein L5 of the 50S subunit (bridge B1b), connecting the 2 subunits; these bridges are implicated in subunit movement. Contacts the tRNAs in the A and P-sites.</text>
</comment>
<comment type="subunit">
    <text evidence="1">Part of the 30S ribosomal subunit. Forms a loose heterodimer with protein S19. Forms two bridges to the 50S subunit in the 70S ribosome.</text>
</comment>
<comment type="similarity">
    <text evidence="1">Belongs to the universal ribosomal protein uS13 family.</text>
</comment>